<comment type="function">
    <text evidence="2">Methyltransferase; part of the gene cluster that mediates the biosynthesis of novofumigatonin, a heavily oxygenated meroterpenoid containing a unique orthoester moiety (PubMed:29968715). The first step of the pathway is the synthesis of 3,5-dimethylorsellinic acid (DMOA) by the polyketide synthase nvfA via condensation of one acetyl-CoA starter unit with 3 malonyl-CoA units and 2 methylations (PubMed:29968715). DMOA is then converted to farnesyl-DMOA by the farnesyltransferase nvfB (PubMed:29968715). Epoxydation by FAD-dependent monooxygenase nvfK, followed by a protonation-initiated cyclization catalyzed by the terpene cyclase nvfL leads to the production of asnavolin H (PubMed:29968715). The short chain dehydrogenase nvfC then as a 3-OH dehydrogenase of asnovolin H to yield chemesin D (PubMed:29968715). There are two branches to synthesize asnovolin A from chemesin D (PubMed:29968715). In one branch, chemesin D undergoes Baeyer-Villiger oxidation by nvfH, methylation by nvfJ, and enoyl reduction by the nvfM D enoylreductase that reduces the double bond between C-5'and C-6', to form respectively asnovolin I, asnovolin K, and asnovolin A (PubMed:29968715). In the other branch, the methylation precedes the Baeyer-Villiger oxidation and the enoyl reduction to yield asnovolin A via the asnovolin J intermediate (PubMed:29968715). Asnovolin A is further converted to fumigatonoid A by the Fe(II)/2-oxoglutarate-dependent dioxygenase nvfI that catalyzes an endoperoxidation reaction (PubMed:29968715). The alpha/beta hydrolase nvfD then acts as an epimerase that converts fumigatonoid A to its C-5' epimer, which then undergoes spontaneous or nvfD-catalyzed lactonization (PubMed:29968715). The following step utilizes the ketoreductase nvfG to produce fumigatonoid B (PubMed:29968715). The dioxygenase nvfE further converts fumigatonoid B into fumigatonoid C (PubMed:29968715). Finally the Fe(II)/2-oxoglutarate-dependent dioxygenase nvfF catalyzes two rounds of oxidation to transform fumigatonoid C into the end product, novofumigatonin A (PubMed:29968715).</text>
</comment>
<comment type="catalytic activity">
    <reaction evidence="2">
        <text>chermesin D + S-adenosyl-L-methionine = chermesin D methyl ester + S-adenosyl-L-homocysteine</text>
        <dbReference type="Rhea" id="RHEA:67056"/>
        <dbReference type="ChEBI" id="CHEBI:57856"/>
        <dbReference type="ChEBI" id="CHEBI:59789"/>
        <dbReference type="ChEBI" id="CHEBI:156464"/>
        <dbReference type="ChEBI" id="CHEBI:167691"/>
    </reaction>
    <physiologicalReaction direction="left-to-right" evidence="2">
        <dbReference type="Rhea" id="RHEA:67057"/>
    </physiologicalReaction>
</comment>
<comment type="catalytic activity">
    <reaction evidence="2">
        <text>asnovolin I + S-adenosyl-L-methionine = asnovolin K + S-adenosyl-L-homocysteine</text>
        <dbReference type="Rhea" id="RHEA:67060"/>
        <dbReference type="ChEBI" id="CHEBI:57856"/>
        <dbReference type="ChEBI" id="CHEBI:59789"/>
        <dbReference type="ChEBI" id="CHEBI:167684"/>
        <dbReference type="ChEBI" id="CHEBI:167685"/>
    </reaction>
    <physiologicalReaction direction="left-to-right" evidence="2">
        <dbReference type="Rhea" id="RHEA:67061"/>
    </physiologicalReaction>
</comment>
<comment type="pathway">
    <text evidence="2">Secondary metabolite biosynthesis; terpenoid biosynthesis.</text>
</comment>
<comment type="subunit">
    <text evidence="1">Homodimer.</text>
</comment>
<comment type="disruption phenotype">
    <text evidence="2">Completely abolishes the production of both novofumigatonin and asnovolin A, but accumulates the tetracyclic intermediate asnovolin I.</text>
</comment>
<comment type="similarity">
    <text evidence="4">Belongs to the class I-like SAM-binding methyltransferase superfamily.</text>
</comment>
<accession>A0A2I1BSV7</accession>
<reference key="1">
    <citation type="journal article" date="2018" name="Proc. Natl. Acad. Sci. U.S.A.">
        <title>Linking secondary metabolites to gene clusters through genome sequencing of six diverse Aspergillus species.</title>
        <authorList>
            <person name="Kjaerboelling I."/>
            <person name="Vesth T.C."/>
            <person name="Frisvad J.C."/>
            <person name="Nybo J.L."/>
            <person name="Theobald S."/>
            <person name="Kuo A."/>
            <person name="Bowyer P."/>
            <person name="Matsuda Y."/>
            <person name="Mondo S."/>
            <person name="Lyhne E.K."/>
            <person name="Kogle M.E."/>
            <person name="Clum A."/>
            <person name="Lipzen A."/>
            <person name="Salamov A."/>
            <person name="Ngan C.Y."/>
            <person name="Daum C."/>
            <person name="Chiniquy J."/>
            <person name="Barry K."/>
            <person name="LaButti K."/>
            <person name="Haridas S."/>
            <person name="Simmons B.A."/>
            <person name="Magnuson J.K."/>
            <person name="Mortensen U.H."/>
            <person name="Larsen T.O."/>
            <person name="Grigoriev I.V."/>
            <person name="Baker S.E."/>
            <person name="Andersen M.R."/>
        </authorList>
    </citation>
    <scope>NUCLEOTIDE SEQUENCE [LARGE SCALE GENOMIC DNA]</scope>
    <source>
        <strain>IBT 16806</strain>
    </source>
</reference>
<reference key="2">
    <citation type="journal article" date="2018" name="Nat. Commun.">
        <title>Novofumigatonin biosynthesis involves a non-heme iron-dependent endoperoxide isomerase for orthoester formation.</title>
        <authorList>
            <person name="Matsuda Y."/>
            <person name="Bai T."/>
            <person name="Phippen C.B.W."/>
            <person name="Noedvig C.S."/>
            <person name="Kjaerboelling I."/>
            <person name="Vesth T.C."/>
            <person name="Andersen M.R."/>
            <person name="Mortensen U.H."/>
            <person name="Gotfredsen C.H."/>
            <person name="Abe I."/>
            <person name="Larsen T.O."/>
        </authorList>
    </citation>
    <scope>FUNCTION</scope>
    <scope>DISRUPTION PHENOTYPE</scope>
    <scope>CATALYTIC ACTIVITY</scope>
    <scope>PATHWAY</scope>
</reference>
<name>NVFJ_ASPN1</name>
<feature type="chain" id="PRO_0000453085" description="Asnovolin E/Chermesin D methyltransferase nvfJ">
    <location>
        <begin position="1"/>
        <end position="278"/>
    </location>
</feature>
<feature type="binding site" evidence="1">
    <location>
        <begin position="125"/>
        <end position="126"/>
    </location>
    <ligand>
        <name>S-adenosyl-L-methionine</name>
        <dbReference type="ChEBI" id="CHEBI:59789"/>
    </ligand>
</feature>
<feature type="binding site" evidence="1">
    <location>
        <begin position="152"/>
        <end position="153"/>
    </location>
    <ligand>
        <name>S-adenosyl-L-methionine</name>
        <dbReference type="ChEBI" id="CHEBI:59789"/>
    </ligand>
</feature>
<feature type="binding site" evidence="1">
    <location>
        <begin position="153"/>
        <end position="154"/>
    </location>
    <ligand>
        <name>S-adenosyl-L-methionine</name>
        <dbReference type="ChEBI" id="CHEBI:59789"/>
    </ligand>
</feature>
<gene>
    <name evidence="3" type="primary">nvfJ</name>
    <name type="ORF">P174DRAFT_425989</name>
</gene>
<dbReference type="EC" id="2.1.1.-" evidence="2"/>
<dbReference type="EMBL" id="MSZS01000014">
    <property type="protein sequence ID" value="PKX88478.1"/>
    <property type="molecule type" value="Genomic_DNA"/>
</dbReference>
<dbReference type="SMR" id="A0A2I1BSV7"/>
<dbReference type="STRING" id="1392255.A0A2I1BSV7"/>
<dbReference type="VEuPathDB" id="FungiDB:P174DRAFT_425989"/>
<dbReference type="OMA" id="DFYDIGY"/>
<dbReference type="OrthoDB" id="2094832at2759"/>
<dbReference type="UniPathway" id="UPA00213"/>
<dbReference type="Proteomes" id="UP000234474">
    <property type="component" value="Unassembled WGS sequence"/>
</dbReference>
<dbReference type="GO" id="GO:0008168">
    <property type="term" value="F:methyltransferase activity"/>
    <property type="evidence" value="ECO:0000314"/>
    <property type="project" value="UniProt"/>
</dbReference>
<dbReference type="GO" id="GO:0032259">
    <property type="term" value="P:methylation"/>
    <property type="evidence" value="ECO:0007669"/>
    <property type="project" value="UniProtKB-KW"/>
</dbReference>
<dbReference type="GO" id="GO:0140782">
    <property type="term" value="P:novofumigatonin biosynthetic process"/>
    <property type="evidence" value="ECO:0000314"/>
    <property type="project" value="GO_Central"/>
</dbReference>
<dbReference type="InterPro" id="IPR051654">
    <property type="entry name" value="Meroterpenoid_MTases"/>
</dbReference>
<dbReference type="InterPro" id="IPR029063">
    <property type="entry name" value="SAM-dependent_MTases_sf"/>
</dbReference>
<dbReference type="PANTHER" id="PTHR35897">
    <property type="entry name" value="METHYLTRANSFERASE AUSD"/>
    <property type="match status" value="1"/>
</dbReference>
<dbReference type="PANTHER" id="PTHR35897:SF1">
    <property type="entry name" value="METHYLTRANSFERASE AUSD"/>
    <property type="match status" value="1"/>
</dbReference>
<dbReference type="SUPFAM" id="SSF53335">
    <property type="entry name" value="S-adenosyl-L-methionine-dependent methyltransferases"/>
    <property type="match status" value="1"/>
</dbReference>
<organism>
    <name type="scientific">Aspergillus novofumigatus (strain IBT 16806)</name>
    <dbReference type="NCBI Taxonomy" id="1392255"/>
    <lineage>
        <taxon>Eukaryota</taxon>
        <taxon>Fungi</taxon>
        <taxon>Dikarya</taxon>
        <taxon>Ascomycota</taxon>
        <taxon>Pezizomycotina</taxon>
        <taxon>Eurotiomycetes</taxon>
        <taxon>Eurotiomycetidae</taxon>
        <taxon>Eurotiales</taxon>
        <taxon>Aspergillaceae</taxon>
        <taxon>Aspergillus</taxon>
        <taxon>Aspergillus subgen. Fumigati</taxon>
    </lineage>
</organism>
<protein>
    <recommendedName>
        <fullName evidence="3">Asnovolin E/Chermesin D methyltransferase nvfJ</fullName>
        <ecNumber evidence="2">2.1.1.-</ecNumber>
    </recommendedName>
    <alternativeName>
        <fullName evidence="3">Novofumigatonin biosynthesis cluster protein J</fullName>
    </alternativeName>
</protein>
<sequence length="278" mass="31863">MTVETITPQTPVSLPKTAVICNDFKLDRVNEPARSILEKYSKIPSREILEHVRKIRDEAFAEFPYPCIGRFSFLDLSISQSPKYPEILHRVVNGEKFLDLGCAFGQELRQLVYDGAPSDNLYGSDLHNGLMHLGYDLFRDVSTLKSRFIATNILEGNSDLISQLSGQMNIIYSSLFFHLFDWDQSLVIAKHVLRLLSLQPGSMITGRFVAYRDWNFAKEKLGSTLRFYFDLSSWTQLWKQVEVDTGSKLNIEHWEQSDNMLTDNGIGGYMLCFAITRQ</sequence>
<keyword id="KW-0489">Methyltransferase</keyword>
<keyword id="KW-1185">Reference proteome</keyword>
<keyword id="KW-0949">S-adenosyl-L-methionine</keyword>
<keyword id="KW-0808">Transferase</keyword>
<evidence type="ECO:0000250" key="1">
    <source>
        <dbReference type="UniProtKB" id="Q3J7D1"/>
    </source>
</evidence>
<evidence type="ECO:0000269" key="2">
    <source>
    </source>
</evidence>
<evidence type="ECO:0000303" key="3">
    <source>
    </source>
</evidence>
<evidence type="ECO:0000305" key="4"/>
<proteinExistence type="evidence at protein level"/>